<organism>
    <name type="scientific">Pseudomonas fluorescens (strain SBW25)</name>
    <dbReference type="NCBI Taxonomy" id="216595"/>
    <lineage>
        <taxon>Bacteria</taxon>
        <taxon>Pseudomonadati</taxon>
        <taxon>Pseudomonadota</taxon>
        <taxon>Gammaproteobacteria</taxon>
        <taxon>Pseudomonadales</taxon>
        <taxon>Pseudomonadaceae</taxon>
        <taxon>Pseudomonas</taxon>
    </lineage>
</organism>
<proteinExistence type="inferred from homology"/>
<name>STHA_PSEFS</name>
<accession>C3K4W1</accession>
<comment type="function">
    <text evidence="1">Conversion of NADPH, generated by peripheral catabolic pathways, to NADH, which can enter the respiratory chain for energy generation.</text>
</comment>
<comment type="catalytic activity">
    <reaction evidence="1">
        <text>NAD(+) + NADPH = NADH + NADP(+)</text>
        <dbReference type="Rhea" id="RHEA:11692"/>
        <dbReference type="ChEBI" id="CHEBI:57540"/>
        <dbReference type="ChEBI" id="CHEBI:57783"/>
        <dbReference type="ChEBI" id="CHEBI:57945"/>
        <dbReference type="ChEBI" id="CHEBI:58349"/>
        <dbReference type="EC" id="1.6.1.1"/>
    </reaction>
</comment>
<comment type="cofactor">
    <cofactor evidence="1">
        <name>FAD</name>
        <dbReference type="ChEBI" id="CHEBI:57692"/>
    </cofactor>
    <text evidence="1">Binds 1 FAD per subunit.</text>
</comment>
<comment type="subcellular location">
    <subcellularLocation>
        <location evidence="1">Cytoplasm</location>
    </subcellularLocation>
</comment>
<comment type="similarity">
    <text evidence="1">Belongs to the class-I pyridine nucleotide-disulfide oxidoreductase family.</text>
</comment>
<reference key="1">
    <citation type="journal article" date="2009" name="Genome Biol.">
        <title>Genomic and genetic analyses of diversity and plant interactions of Pseudomonas fluorescens.</title>
        <authorList>
            <person name="Silby M.W."/>
            <person name="Cerdeno-Tarraga A.M."/>
            <person name="Vernikos G.S."/>
            <person name="Giddens S.R."/>
            <person name="Jackson R.W."/>
            <person name="Preston G.M."/>
            <person name="Zhang X.-X."/>
            <person name="Moon C.D."/>
            <person name="Gehrig S.M."/>
            <person name="Godfrey S.A.C."/>
            <person name="Knight C.G."/>
            <person name="Malone J.G."/>
            <person name="Robinson Z."/>
            <person name="Spiers A.J."/>
            <person name="Harris S."/>
            <person name="Challis G.L."/>
            <person name="Yaxley A.M."/>
            <person name="Harris D."/>
            <person name="Seeger K."/>
            <person name="Murphy L."/>
            <person name="Rutter S."/>
            <person name="Squares R."/>
            <person name="Quail M.A."/>
            <person name="Saunders E."/>
            <person name="Mavromatis K."/>
            <person name="Brettin T.S."/>
            <person name="Bentley S.D."/>
            <person name="Hothersall J."/>
            <person name="Stephens E."/>
            <person name="Thomas C.M."/>
            <person name="Parkhill J."/>
            <person name="Levy S.B."/>
            <person name="Rainey P.B."/>
            <person name="Thomson N.R."/>
        </authorList>
    </citation>
    <scope>NUCLEOTIDE SEQUENCE [LARGE SCALE GENOMIC DNA]</scope>
    <source>
        <strain>SBW25</strain>
    </source>
</reference>
<dbReference type="EC" id="1.6.1.1" evidence="1"/>
<dbReference type="EMBL" id="AM181176">
    <property type="protein sequence ID" value="CAY47817.1"/>
    <property type="molecule type" value="Genomic_DNA"/>
</dbReference>
<dbReference type="RefSeq" id="WP_012722857.1">
    <property type="nucleotide sequence ID" value="NC_012660.1"/>
</dbReference>
<dbReference type="SMR" id="C3K4W1"/>
<dbReference type="STRING" id="294.SRM1_03773"/>
<dbReference type="GeneID" id="93463179"/>
<dbReference type="eggNOG" id="COG1249">
    <property type="taxonomic scope" value="Bacteria"/>
</dbReference>
<dbReference type="HOGENOM" id="CLU_016755_0_0_6"/>
<dbReference type="OrthoDB" id="9800167at2"/>
<dbReference type="GO" id="GO:0005829">
    <property type="term" value="C:cytosol"/>
    <property type="evidence" value="ECO:0007669"/>
    <property type="project" value="TreeGrafter"/>
</dbReference>
<dbReference type="GO" id="GO:0004148">
    <property type="term" value="F:dihydrolipoyl dehydrogenase (NADH) activity"/>
    <property type="evidence" value="ECO:0007669"/>
    <property type="project" value="TreeGrafter"/>
</dbReference>
<dbReference type="GO" id="GO:0050660">
    <property type="term" value="F:flavin adenine dinucleotide binding"/>
    <property type="evidence" value="ECO:0007669"/>
    <property type="project" value="TreeGrafter"/>
</dbReference>
<dbReference type="GO" id="GO:0003957">
    <property type="term" value="F:NAD(P)+ transhydrogenase (Si-specific) activity"/>
    <property type="evidence" value="ECO:0007669"/>
    <property type="project" value="UniProtKB-UniRule"/>
</dbReference>
<dbReference type="GO" id="GO:0006103">
    <property type="term" value="P:2-oxoglutarate metabolic process"/>
    <property type="evidence" value="ECO:0007669"/>
    <property type="project" value="TreeGrafter"/>
</dbReference>
<dbReference type="GO" id="GO:0006739">
    <property type="term" value="P:NADP metabolic process"/>
    <property type="evidence" value="ECO:0007669"/>
    <property type="project" value="UniProtKB-UniRule"/>
</dbReference>
<dbReference type="FunFam" id="3.30.390.30:FF:000002">
    <property type="entry name" value="Soluble pyridine nucleotide transhydrogenase"/>
    <property type="match status" value="1"/>
</dbReference>
<dbReference type="FunFam" id="3.50.50.60:FF:000008">
    <property type="entry name" value="Soluble pyridine nucleotide transhydrogenase"/>
    <property type="match status" value="1"/>
</dbReference>
<dbReference type="Gene3D" id="3.30.390.30">
    <property type="match status" value="1"/>
</dbReference>
<dbReference type="Gene3D" id="3.50.50.60">
    <property type="entry name" value="FAD/NAD(P)-binding domain"/>
    <property type="match status" value="2"/>
</dbReference>
<dbReference type="HAMAP" id="MF_00247">
    <property type="entry name" value="SthA"/>
    <property type="match status" value="1"/>
</dbReference>
<dbReference type="InterPro" id="IPR050151">
    <property type="entry name" value="Class-I_Pyr_Nuc-Dis_Oxidored"/>
</dbReference>
<dbReference type="InterPro" id="IPR036188">
    <property type="entry name" value="FAD/NAD-bd_sf"/>
</dbReference>
<dbReference type="InterPro" id="IPR023753">
    <property type="entry name" value="FAD/NAD-binding_dom"/>
</dbReference>
<dbReference type="InterPro" id="IPR016156">
    <property type="entry name" value="FAD/NAD-linked_Rdtase_dimer_sf"/>
</dbReference>
<dbReference type="InterPro" id="IPR001100">
    <property type="entry name" value="Pyr_nuc-diS_OxRdtase"/>
</dbReference>
<dbReference type="InterPro" id="IPR004099">
    <property type="entry name" value="Pyr_nucl-diS_OxRdtase_dimer"/>
</dbReference>
<dbReference type="InterPro" id="IPR022962">
    <property type="entry name" value="STH_gammaproteobact"/>
</dbReference>
<dbReference type="NCBIfam" id="NF003585">
    <property type="entry name" value="PRK05249.1"/>
    <property type="match status" value="1"/>
</dbReference>
<dbReference type="PANTHER" id="PTHR22912">
    <property type="entry name" value="DISULFIDE OXIDOREDUCTASE"/>
    <property type="match status" value="1"/>
</dbReference>
<dbReference type="PANTHER" id="PTHR22912:SF93">
    <property type="entry name" value="SOLUBLE PYRIDINE NUCLEOTIDE TRANSHYDROGENASE"/>
    <property type="match status" value="1"/>
</dbReference>
<dbReference type="Pfam" id="PF07992">
    <property type="entry name" value="Pyr_redox_2"/>
    <property type="match status" value="1"/>
</dbReference>
<dbReference type="Pfam" id="PF02852">
    <property type="entry name" value="Pyr_redox_dim"/>
    <property type="match status" value="1"/>
</dbReference>
<dbReference type="PIRSF" id="PIRSF000350">
    <property type="entry name" value="Mercury_reductase_MerA"/>
    <property type="match status" value="1"/>
</dbReference>
<dbReference type="PRINTS" id="PR00368">
    <property type="entry name" value="FADPNR"/>
</dbReference>
<dbReference type="PRINTS" id="PR00411">
    <property type="entry name" value="PNDRDTASEI"/>
</dbReference>
<dbReference type="SUPFAM" id="SSF51905">
    <property type="entry name" value="FAD/NAD(P)-binding domain"/>
    <property type="match status" value="1"/>
</dbReference>
<dbReference type="SUPFAM" id="SSF55424">
    <property type="entry name" value="FAD/NAD-linked reductases, dimerisation (C-terminal) domain"/>
    <property type="match status" value="1"/>
</dbReference>
<gene>
    <name evidence="1" type="primary">sthA</name>
    <name type="ordered locus">PFLU_1569</name>
</gene>
<feature type="chain" id="PRO_1000204500" description="Soluble pyridine nucleotide transhydrogenase">
    <location>
        <begin position="1"/>
        <end position="464"/>
    </location>
</feature>
<feature type="binding site" evidence="1">
    <location>
        <begin position="35"/>
        <end position="44"/>
    </location>
    <ligand>
        <name>FAD</name>
        <dbReference type="ChEBI" id="CHEBI:57692"/>
    </ligand>
</feature>
<sequence>MAVYNYDVVVLGSGPAGEGAAMNAAKAGRKVAMVDSRRQVGGNCTHLGTIPSKALRHSVRQIMQFNTNPMFRAIGEPRWFSFPDVLKSAEKVISKQVASRTGYYARNRVDLFFGTGSFADEQTVEVVCANGVVEKLVAKHIIIATGSRPYRPADIDFHHPRIYDSDTILSLGHTPRKLIIYGAGVIGCEYASIFSGLGVLVELVDNRDQLLSFLDSEISQALSYHFSNNNITVRHNEEYERVEGLDNGVILHLKSGKKIKADALLWCNGRTGNTDKLGMENIGVKVNSRGQIEVDENYRTCVTNIYGAGDVIGWPSLASAAHDQGRSAAGSIVDNGSWRYVNDVPTGIYTIPEISSIGKNEHELTKAKVPYEVGKAFFKSMARAQIAGEPQGMLKILFHRETLEVLGVHCFGYQASEIVHIGQAIMSQPGEQNTLKYFVNTTFNYPTMAEAYRVAAYDGLNRLF</sequence>
<keyword id="KW-0963">Cytoplasm</keyword>
<keyword id="KW-0274">FAD</keyword>
<keyword id="KW-0285">Flavoprotein</keyword>
<keyword id="KW-0520">NAD</keyword>
<keyword id="KW-0521">NADP</keyword>
<keyword id="KW-0560">Oxidoreductase</keyword>
<protein>
    <recommendedName>
        <fullName evidence="1">Soluble pyridine nucleotide transhydrogenase</fullName>
        <shortName evidence="1">STH</shortName>
        <ecNumber evidence="1">1.6.1.1</ecNumber>
    </recommendedName>
    <alternativeName>
        <fullName evidence="1">NAD(P)(+) transhydrogenase [B-specific]</fullName>
    </alternativeName>
</protein>
<evidence type="ECO:0000255" key="1">
    <source>
        <dbReference type="HAMAP-Rule" id="MF_00247"/>
    </source>
</evidence>